<name>ISPDF_RHOPB</name>
<keyword id="KW-0414">Isoprene biosynthesis</keyword>
<keyword id="KW-0456">Lyase</keyword>
<keyword id="KW-0479">Metal-binding</keyword>
<keyword id="KW-0511">Multifunctional enzyme</keyword>
<keyword id="KW-0548">Nucleotidyltransferase</keyword>
<keyword id="KW-0808">Transferase</keyword>
<protein>
    <recommendedName>
        <fullName evidence="1">Bifunctional enzyme IspD/IspF</fullName>
    </recommendedName>
    <domain>
        <recommendedName>
            <fullName evidence="1">2-C-methyl-D-erythritol 4-phosphate cytidylyltransferase</fullName>
            <ecNumber evidence="1">2.7.7.60</ecNumber>
        </recommendedName>
        <alternativeName>
            <fullName evidence="1">4-diphosphocytidyl-2C-methyl-D-erythritol synthase</fullName>
        </alternativeName>
        <alternativeName>
            <fullName evidence="1">MEP cytidylyltransferase</fullName>
            <shortName evidence="1">MCT</shortName>
        </alternativeName>
    </domain>
    <domain>
        <recommendedName>
            <fullName evidence="1">2-C-methyl-D-erythritol 2,4-cyclodiphosphate synthase</fullName>
            <shortName evidence="1">MECDP-synthase</shortName>
            <shortName evidence="1">MECPP-synthase</shortName>
            <shortName evidence="1">MECPS</shortName>
            <ecNumber evidence="1">4.6.1.12</ecNumber>
        </recommendedName>
    </domain>
</protein>
<accession>Q214R1</accession>
<gene>
    <name evidence="1" type="primary">ispDF</name>
    <name type="ordered locus">RPC_2575</name>
</gene>
<reference key="1">
    <citation type="submission" date="2006-03" db="EMBL/GenBank/DDBJ databases">
        <title>Complete sequence of Rhodopseudomonas palustris BisB18.</title>
        <authorList>
            <consortium name="US DOE Joint Genome Institute"/>
            <person name="Copeland A."/>
            <person name="Lucas S."/>
            <person name="Lapidus A."/>
            <person name="Barry K."/>
            <person name="Detter J.C."/>
            <person name="Glavina del Rio T."/>
            <person name="Hammon N."/>
            <person name="Israni S."/>
            <person name="Dalin E."/>
            <person name="Tice H."/>
            <person name="Pitluck S."/>
            <person name="Chain P."/>
            <person name="Malfatti S."/>
            <person name="Shin M."/>
            <person name="Vergez L."/>
            <person name="Schmutz J."/>
            <person name="Larimer F."/>
            <person name="Land M."/>
            <person name="Hauser L."/>
            <person name="Pelletier D.A."/>
            <person name="Kyrpides N."/>
            <person name="Anderson I."/>
            <person name="Oda Y."/>
            <person name="Harwood C.S."/>
            <person name="Richardson P."/>
        </authorList>
    </citation>
    <scope>NUCLEOTIDE SEQUENCE [LARGE SCALE GENOMIC DNA]</scope>
    <source>
        <strain>BisB18</strain>
    </source>
</reference>
<proteinExistence type="inferred from homology"/>
<dbReference type="EC" id="2.7.7.60" evidence="1"/>
<dbReference type="EC" id="4.6.1.12" evidence="1"/>
<dbReference type="EMBL" id="CP000301">
    <property type="protein sequence ID" value="ABD88125.1"/>
    <property type="molecule type" value="Genomic_DNA"/>
</dbReference>
<dbReference type="SMR" id="Q214R1"/>
<dbReference type="STRING" id="316056.RPC_2575"/>
<dbReference type="KEGG" id="rpc:RPC_2575"/>
<dbReference type="eggNOG" id="COG0245">
    <property type="taxonomic scope" value="Bacteria"/>
</dbReference>
<dbReference type="eggNOG" id="COG1211">
    <property type="taxonomic scope" value="Bacteria"/>
</dbReference>
<dbReference type="HOGENOM" id="CLU_042800_2_3_5"/>
<dbReference type="OrthoDB" id="9804336at2"/>
<dbReference type="UniPathway" id="UPA00056">
    <property type="reaction ID" value="UER00093"/>
</dbReference>
<dbReference type="UniPathway" id="UPA00056">
    <property type="reaction ID" value="UER00095"/>
</dbReference>
<dbReference type="GO" id="GO:0008685">
    <property type="term" value="F:2-C-methyl-D-erythritol 2,4-cyclodiphosphate synthase activity"/>
    <property type="evidence" value="ECO:0007669"/>
    <property type="project" value="UniProtKB-UniRule"/>
</dbReference>
<dbReference type="GO" id="GO:0050518">
    <property type="term" value="F:2-C-methyl-D-erythritol 4-phosphate cytidylyltransferase activity"/>
    <property type="evidence" value="ECO:0007669"/>
    <property type="project" value="UniProtKB-UniRule"/>
</dbReference>
<dbReference type="GO" id="GO:0046872">
    <property type="term" value="F:metal ion binding"/>
    <property type="evidence" value="ECO:0007669"/>
    <property type="project" value="UniProtKB-KW"/>
</dbReference>
<dbReference type="GO" id="GO:0019288">
    <property type="term" value="P:isopentenyl diphosphate biosynthetic process, methylerythritol 4-phosphate pathway"/>
    <property type="evidence" value="ECO:0007669"/>
    <property type="project" value="UniProtKB-UniRule"/>
</dbReference>
<dbReference type="GO" id="GO:0016114">
    <property type="term" value="P:terpenoid biosynthetic process"/>
    <property type="evidence" value="ECO:0007669"/>
    <property type="project" value="InterPro"/>
</dbReference>
<dbReference type="CDD" id="cd02516">
    <property type="entry name" value="CDP-ME_synthetase"/>
    <property type="match status" value="1"/>
</dbReference>
<dbReference type="CDD" id="cd00554">
    <property type="entry name" value="MECDP_synthase"/>
    <property type="match status" value="1"/>
</dbReference>
<dbReference type="FunFam" id="3.90.550.10:FF:000003">
    <property type="entry name" value="2-C-methyl-D-erythritol 4-phosphate cytidylyltransferase"/>
    <property type="match status" value="1"/>
</dbReference>
<dbReference type="Gene3D" id="3.30.1330.50">
    <property type="entry name" value="2-C-methyl-D-erythritol 2,4-cyclodiphosphate synthase"/>
    <property type="match status" value="1"/>
</dbReference>
<dbReference type="Gene3D" id="3.90.550.10">
    <property type="entry name" value="Spore Coat Polysaccharide Biosynthesis Protein SpsA, Chain A"/>
    <property type="match status" value="1"/>
</dbReference>
<dbReference type="HAMAP" id="MF_00108">
    <property type="entry name" value="IspD"/>
    <property type="match status" value="1"/>
</dbReference>
<dbReference type="HAMAP" id="MF_01520">
    <property type="entry name" value="IspDF"/>
    <property type="match status" value="1"/>
</dbReference>
<dbReference type="HAMAP" id="MF_00107">
    <property type="entry name" value="IspF"/>
    <property type="match status" value="1"/>
</dbReference>
<dbReference type="InterPro" id="IPR001228">
    <property type="entry name" value="IspD"/>
</dbReference>
<dbReference type="InterPro" id="IPR026596">
    <property type="entry name" value="IspD/F"/>
</dbReference>
<dbReference type="InterPro" id="IPR034683">
    <property type="entry name" value="IspD/TarI"/>
</dbReference>
<dbReference type="InterPro" id="IPR018294">
    <property type="entry name" value="ISPD_synthase_CS"/>
</dbReference>
<dbReference type="InterPro" id="IPR003526">
    <property type="entry name" value="MECDP_synthase"/>
</dbReference>
<dbReference type="InterPro" id="IPR020555">
    <property type="entry name" value="MECDP_synthase_CS"/>
</dbReference>
<dbReference type="InterPro" id="IPR036571">
    <property type="entry name" value="MECDP_synthase_sf"/>
</dbReference>
<dbReference type="InterPro" id="IPR029044">
    <property type="entry name" value="Nucleotide-diphossugar_trans"/>
</dbReference>
<dbReference type="NCBIfam" id="TIGR00453">
    <property type="entry name" value="ispD"/>
    <property type="match status" value="1"/>
</dbReference>
<dbReference type="NCBIfam" id="TIGR00151">
    <property type="entry name" value="ispF"/>
    <property type="match status" value="1"/>
</dbReference>
<dbReference type="NCBIfam" id="NF006899">
    <property type="entry name" value="PRK09382.1"/>
    <property type="match status" value="1"/>
</dbReference>
<dbReference type="PANTHER" id="PTHR43181">
    <property type="entry name" value="2-C-METHYL-D-ERYTHRITOL 2,4-CYCLODIPHOSPHATE SYNTHASE, CHLOROPLASTIC"/>
    <property type="match status" value="1"/>
</dbReference>
<dbReference type="PANTHER" id="PTHR43181:SF1">
    <property type="entry name" value="2-C-METHYL-D-ERYTHRITOL 2,4-CYCLODIPHOSPHATE SYNTHASE, CHLOROPLASTIC"/>
    <property type="match status" value="1"/>
</dbReference>
<dbReference type="Pfam" id="PF01128">
    <property type="entry name" value="IspD"/>
    <property type="match status" value="1"/>
</dbReference>
<dbReference type="Pfam" id="PF02542">
    <property type="entry name" value="YgbB"/>
    <property type="match status" value="1"/>
</dbReference>
<dbReference type="SUPFAM" id="SSF69765">
    <property type="entry name" value="IpsF-like"/>
    <property type="match status" value="1"/>
</dbReference>
<dbReference type="SUPFAM" id="SSF53448">
    <property type="entry name" value="Nucleotide-diphospho-sugar transferases"/>
    <property type="match status" value="1"/>
</dbReference>
<dbReference type="PROSITE" id="PS01295">
    <property type="entry name" value="ISPD"/>
    <property type="match status" value="1"/>
</dbReference>
<dbReference type="PROSITE" id="PS01350">
    <property type="entry name" value="ISPF"/>
    <property type="match status" value="1"/>
</dbReference>
<comment type="function">
    <text evidence="1">Bifunctional enzyme that catalyzes the formation of 4-diphosphocytidyl-2-C-methyl-D-erythritol from CTP and 2-C-methyl-D-erythritol 4-phosphate (MEP) (IspD), and catalyzes the conversion of 4-diphosphocytidyl-2-C-methyl-D-erythritol 2-phosphate (CDP-ME2P) to 2-C-methyl-D-erythritol 2,4-cyclodiphosphate (ME-CPP) with a corresponding release of cytidine 5-monophosphate (CMP) (IspF).</text>
</comment>
<comment type="catalytic activity">
    <reaction evidence="1">
        <text>2-C-methyl-D-erythritol 4-phosphate + CTP + H(+) = 4-CDP-2-C-methyl-D-erythritol + diphosphate</text>
        <dbReference type="Rhea" id="RHEA:13429"/>
        <dbReference type="ChEBI" id="CHEBI:15378"/>
        <dbReference type="ChEBI" id="CHEBI:33019"/>
        <dbReference type="ChEBI" id="CHEBI:37563"/>
        <dbReference type="ChEBI" id="CHEBI:57823"/>
        <dbReference type="ChEBI" id="CHEBI:58262"/>
        <dbReference type="EC" id="2.7.7.60"/>
    </reaction>
</comment>
<comment type="catalytic activity">
    <reaction evidence="1">
        <text>4-CDP-2-C-methyl-D-erythritol 2-phosphate = 2-C-methyl-D-erythritol 2,4-cyclic diphosphate + CMP</text>
        <dbReference type="Rhea" id="RHEA:23864"/>
        <dbReference type="ChEBI" id="CHEBI:57919"/>
        <dbReference type="ChEBI" id="CHEBI:58483"/>
        <dbReference type="ChEBI" id="CHEBI:60377"/>
        <dbReference type="EC" id="4.6.1.12"/>
    </reaction>
</comment>
<comment type="cofactor">
    <cofactor evidence="1">
        <name>a divalent metal cation</name>
        <dbReference type="ChEBI" id="CHEBI:60240"/>
    </cofactor>
</comment>
<comment type="pathway">
    <text evidence="1">Isoprenoid biosynthesis; isopentenyl diphosphate biosynthesis via DXP pathway; isopentenyl diphosphate from 1-deoxy-D-xylulose 5-phosphate: step 2/6.</text>
</comment>
<comment type="pathway">
    <text evidence="1">Isoprenoid biosynthesis; isopentenyl diphosphate biosynthesis via DXP pathway; isopentenyl diphosphate from 1-deoxy-D-xylulose 5-phosphate: step 4/6.</text>
</comment>
<comment type="similarity">
    <text evidence="1">In the N-terminal section; belongs to the IspD/TarI cytidylyltransferase family. IspD subfamily.</text>
</comment>
<comment type="similarity">
    <text evidence="1">In the C-terminal section; belongs to the IspF family.</text>
</comment>
<evidence type="ECO:0000255" key="1">
    <source>
        <dbReference type="HAMAP-Rule" id="MF_01520"/>
    </source>
</evidence>
<sequence length="398" mass="42099">MSNSKRTAAIIVAGGRGLRAGAGGPKQYRSLAGQPVIFRAMQPFCTHAEIFAVQPVTSPDDAEMFKLAVAGLNYQPPAPGGATRQGSVRAGLEALAADAPDIVLIHDAARPFVDAALISRAIVAAQITGAAVPTIAVTDTIKQINAQGDVVATPDRARLRIAQTPQAFRFDVILEAHRRAAREGRDDFTDDAAIAEWAGLTVATFEGDVANMKLTTPEDFVREESRLGALLGDIRTGTGYDVHAFGDGDHVWLCGLKVPHNRGFLAHSDGDVGLHALVDAILGALADGDIGSHFPPTDPQWKGAASDKFLKYAVDRVTARGGRIANLEVTMICERPKIGPLREPMRQRIAEITGLPVARIAVKATTSERLGFTGREEGIAATASATLRLPWGTNGLAD</sequence>
<feature type="chain" id="PRO_0000296754" description="Bifunctional enzyme IspD/IspF">
    <location>
        <begin position="1"/>
        <end position="398"/>
    </location>
</feature>
<feature type="region of interest" description="2-C-methyl-D-erythritol 4-phosphate cytidylyltransferase" evidence="1">
    <location>
        <begin position="1"/>
        <end position="234"/>
    </location>
</feature>
<feature type="region of interest" description="2-C-methyl-D-erythritol 2,4-cyclodiphosphate synthase" evidence="1">
    <location>
        <begin position="235"/>
        <end position="398"/>
    </location>
</feature>
<feature type="binding site" evidence="1">
    <location>
        <begin position="241"/>
        <end position="243"/>
    </location>
    <ligand>
        <name>4-CDP-2-C-methyl-D-erythritol 2-phosphate</name>
        <dbReference type="ChEBI" id="CHEBI:57919"/>
    </ligand>
</feature>
<feature type="binding site" evidence="1">
    <location>
        <position position="241"/>
    </location>
    <ligand>
        <name>a divalent metal cation</name>
        <dbReference type="ChEBI" id="CHEBI:60240"/>
    </ligand>
</feature>
<feature type="binding site" evidence="1">
    <location>
        <position position="243"/>
    </location>
    <ligand>
        <name>a divalent metal cation</name>
        <dbReference type="ChEBI" id="CHEBI:60240"/>
    </ligand>
</feature>
<feature type="binding site" evidence="1">
    <location>
        <begin position="267"/>
        <end position="268"/>
    </location>
    <ligand>
        <name>4-CDP-2-C-methyl-D-erythritol 2-phosphate</name>
        <dbReference type="ChEBI" id="CHEBI:57919"/>
    </ligand>
</feature>
<feature type="binding site" evidence="1">
    <location>
        <position position="275"/>
    </location>
    <ligand>
        <name>a divalent metal cation</name>
        <dbReference type="ChEBI" id="CHEBI:60240"/>
    </ligand>
</feature>
<feature type="binding site" evidence="1">
    <location>
        <begin position="289"/>
        <end position="291"/>
    </location>
    <ligand>
        <name>4-CDP-2-C-methyl-D-erythritol 2-phosphate</name>
        <dbReference type="ChEBI" id="CHEBI:57919"/>
    </ligand>
</feature>
<feature type="binding site" evidence="1">
    <location>
        <begin position="365"/>
        <end position="368"/>
    </location>
    <ligand>
        <name>4-CDP-2-C-methyl-D-erythritol 2-phosphate</name>
        <dbReference type="ChEBI" id="CHEBI:57919"/>
    </ligand>
</feature>
<feature type="binding site" evidence="1">
    <location>
        <position position="372"/>
    </location>
    <ligand>
        <name>4-CDP-2-C-methyl-D-erythritol 2-phosphate</name>
        <dbReference type="ChEBI" id="CHEBI:57919"/>
    </ligand>
</feature>
<feature type="binding site" evidence="1">
    <location>
        <position position="375"/>
    </location>
    <ligand>
        <name>4-CDP-2-C-methyl-D-erythritol 2-phosphate</name>
        <dbReference type="ChEBI" id="CHEBI:57919"/>
    </ligand>
</feature>
<feature type="site" description="Transition state stabilizer" evidence="1">
    <location>
        <position position="19"/>
    </location>
</feature>
<feature type="site" description="Transition state stabilizer" evidence="1">
    <location>
        <position position="26"/>
    </location>
</feature>
<feature type="site" description="Positions MEP for the nucleophilic attack" evidence="1">
    <location>
        <position position="156"/>
    </location>
</feature>
<feature type="site" description="Positions MEP for the nucleophilic attack" evidence="1">
    <location>
        <position position="213"/>
    </location>
</feature>
<feature type="site" description="Transition state stabilizer" evidence="1">
    <location>
        <position position="267"/>
    </location>
</feature>
<feature type="site" description="Transition state stabilizer" evidence="1">
    <location>
        <position position="366"/>
    </location>
</feature>
<organism>
    <name type="scientific">Rhodopseudomonas palustris (strain BisB18)</name>
    <dbReference type="NCBI Taxonomy" id="316056"/>
    <lineage>
        <taxon>Bacteria</taxon>
        <taxon>Pseudomonadati</taxon>
        <taxon>Pseudomonadota</taxon>
        <taxon>Alphaproteobacteria</taxon>
        <taxon>Hyphomicrobiales</taxon>
        <taxon>Nitrobacteraceae</taxon>
        <taxon>Rhodopseudomonas</taxon>
    </lineage>
</organism>